<accession>P43867</accession>
<keyword id="KW-0963">Cytoplasm</keyword>
<keyword id="KW-0378">Hydrolase</keyword>
<keyword id="KW-0645">Protease</keyword>
<keyword id="KW-1185">Reference proteome</keyword>
<keyword id="KW-0720">Serine protease</keyword>
<feature type="chain" id="PRO_0000179566" description="ATP-dependent Clp protease proteolytic subunit">
    <location>
        <begin position="1"/>
        <end position="193"/>
    </location>
</feature>
<feature type="active site" description="Nucleophile" evidence="1">
    <location>
        <position position="98"/>
    </location>
</feature>
<feature type="active site" evidence="1">
    <location>
        <position position="123"/>
    </location>
</feature>
<reference key="1">
    <citation type="journal article" date="1995" name="Science">
        <title>Whole-genome random sequencing and assembly of Haemophilus influenzae Rd.</title>
        <authorList>
            <person name="Fleischmann R.D."/>
            <person name="Adams M.D."/>
            <person name="White O."/>
            <person name="Clayton R.A."/>
            <person name="Kirkness E.F."/>
            <person name="Kerlavage A.R."/>
            <person name="Bult C.J."/>
            <person name="Tomb J.-F."/>
            <person name="Dougherty B.A."/>
            <person name="Merrick J.M."/>
            <person name="McKenney K."/>
            <person name="Sutton G.G."/>
            <person name="FitzHugh W."/>
            <person name="Fields C.A."/>
            <person name="Gocayne J.D."/>
            <person name="Scott J.D."/>
            <person name="Shirley R."/>
            <person name="Liu L.-I."/>
            <person name="Glodek A."/>
            <person name="Kelley J.M."/>
            <person name="Weidman J.F."/>
            <person name="Phillips C.A."/>
            <person name="Spriggs T."/>
            <person name="Hedblom E."/>
            <person name="Cotton M.D."/>
            <person name="Utterback T.R."/>
            <person name="Hanna M.C."/>
            <person name="Nguyen D.T."/>
            <person name="Saudek D.M."/>
            <person name="Brandon R.C."/>
            <person name="Fine L.D."/>
            <person name="Fritchman J.L."/>
            <person name="Fuhrmann J.L."/>
            <person name="Geoghagen N.S.M."/>
            <person name="Gnehm C.L."/>
            <person name="McDonald L.A."/>
            <person name="Small K.V."/>
            <person name="Fraser C.M."/>
            <person name="Smith H.O."/>
            <person name="Venter J.C."/>
        </authorList>
    </citation>
    <scope>NUCLEOTIDE SEQUENCE [LARGE SCALE GENOMIC DNA]</scope>
    <source>
        <strain>ATCC 51907 / DSM 11121 / KW20 / Rd</strain>
    </source>
</reference>
<name>CLPP_HAEIN</name>
<evidence type="ECO:0000255" key="1">
    <source>
        <dbReference type="HAMAP-Rule" id="MF_00444"/>
    </source>
</evidence>
<organism>
    <name type="scientific">Haemophilus influenzae (strain ATCC 51907 / DSM 11121 / KW20 / Rd)</name>
    <dbReference type="NCBI Taxonomy" id="71421"/>
    <lineage>
        <taxon>Bacteria</taxon>
        <taxon>Pseudomonadati</taxon>
        <taxon>Pseudomonadota</taxon>
        <taxon>Gammaproteobacteria</taxon>
        <taxon>Pasteurellales</taxon>
        <taxon>Pasteurellaceae</taxon>
        <taxon>Haemophilus</taxon>
    </lineage>
</organism>
<proteinExistence type="inferred from homology"/>
<dbReference type="EC" id="3.4.21.92" evidence="1"/>
<dbReference type="EMBL" id="L42023">
    <property type="protein sequence ID" value="AAC22371.1"/>
    <property type="molecule type" value="Genomic_DNA"/>
</dbReference>
<dbReference type="PIR" id="D64088">
    <property type="entry name" value="D64088"/>
</dbReference>
<dbReference type="RefSeq" id="NP_438872.3">
    <property type="nucleotide sequence ID" value="NC_000907.1"/>
</dbReference>
<dbReference type="SMR" id="P43867"/>
<dbReference type="STRING" id="71421.HI_0714"/>
<dbReference type="MEROPS" id="S14.001"/>
<dbReference type="EnsemblBacteria" id="AAC22371">
    <property type="protein sequence ID" value="AAC22371"/>
    <property type="gene ID" value="HI_0714"/>
</dbReference>
<dbReference type="KEGG" id="hin:HI_0714"/>
<dbReference type="PATRIC" id="fig|71421.8.peg.746"/>
<dbReference type="eggNOG" id="COG0740">
    <property type="taxonomic scope" value="Bacteria"/>
</dbReference>
<dbReference type="HOGENOM" id="CLU_058707_3_2_6"/>
<dbReference type="OrthoDB" id="9802800at2"/>
<dbReference type="PhylomeDB" id="P43867"/>
<dbReference type="BioCyc" id="HINF71421:G1GJ1-748-MONOMER"/>
<dbReference type="BRENDA" id="3.4.21.92">
    <property type="organism ID" value="2529"/>
</dbReference>
<dbReference type="Proteomes" id="UP000000579">
    <property type="component" value="Chromosome"/>
</dbReference>
<dbReference type="GO" id="GO:0005737">
    <property type="term" value="C:cytoplasm"/>
    <property type="evidence" value="ECO:0007669"/>
    <property type="project" value="UniProtKB-SubCell"/>
</dbReference>
<dbReference type="GO" id="GO:0009368">
    <property type="term" value="C:endopeptidase Clp complex"/>
    <property type="evidence" value="ECO:0000318"/>
    <property type="project" value="GO_Central"/>
</dbReference>
<dbReference type="GO" id="GO:0004176">
    <property type="term" value="F:ATP-dependent peptidase activity"/>
    <property type="evidence" value="ECO:0000318"/>
    <property type="project" value="GO_Central"/>
</dbReference>
<dbReference type="GO" id="GO:0051117">
    <property type="term" value="F:ATPase binding"/>
    <property type="evidence" value="ECO:0000318"/>
    <property type="project" value="GO_Central"/>
</dbReference>
<dbReference type="GO" id="GO:0004252">
    <property type="term" value="F:serine-type endopeptidase activity"/>
    <property type="evidence" value="ECO:0000318"/>
    <property type="project" value="GO_Central"/>
</dbReference>
<dbReference type="GO" id="GO:0006515">
    <property type="term" value="P:protein quality control for misfolded or incompletely synthesized proteins"/>
    <property type="evidence" value="ECO:0000318"/>
    <property type="project" value="GO_Central"/>
</dbReference>
<dbReference type="CDD" id="cd07017">
    <property type="entry name" value="S14_ClpP_2"/>
    <property type="match status" value="1"/>
</dbReference>
<dbReference type="FunFam" id="3.90.226.10:FF:000001">
    <property type="entry name" value="ATP-dependent Clp protease proteolytic subunit"/>
    <property type="match status" value="1"/>
</dbReference>
<dbReference type="Gene3D" id="3.90.226.10">
    <property type="entry name" value="2-enoyl-CoA Hydratase, Chain A, domain 1"/>
    <property type="match status" value="1"/>
</dbReference>
<dbReference type="HAMAP" id="MF_00444">
    <property type="entry name" value="ClpP"/>
    <property type="match status" value="1"/>
</dbReference>
<dbReference type="InterPro" id="IPR001907">
    <property type="entry name" value="ClpP"/>
</dbReference>
<dbReference type="InterPro" id="IPR029045">
    <property type="entry name" value="ClpP/crotonase-like_dom_sf"/>
</dbReference>
<dbReference type="InterPro" id="IPR023562">
    <property type="entry name" value="ClpP/TepA"/>
</dbReference>
<dbReference type="InterPro" id="IPR033135">
    <property type="entry name" value="ClpP_His_AS"/>
</dbReference>
<dbReference type="InterPro" id="IPR018215">
    <property type="entry name" value="ClpP_Ser_AS"/>
</dbReference>
<dbReference type="NCBIfam" id="TIGR00493">
    <property type="entry name" value="clpP"/>
    <property type="match status" value="1"/>
</dbReference>
<dbReference type="NCBIfam" id="NF001368">
    <property type="entry name" value="PRK00277.1"/>
    <property type="match status" value="1"/>
</dbReference>
<dbReference type="NCBIfam" id="NF009205">
    <property type="entry name" value="PRK12553.1"/>
    <property type="match status" value="1"/>
</dbReference>
<dbReference type="PANTHER" id="PTHR10381">
    <property type="entry name" value="ATP-DEPENDENT CLP PROTEASE PROTEOLYTIC SUBUNIT"/>
    <property type="match status" value="1"/>
</dbReference>
<dbReference type="PANTHER" id="PTHR10381:SF70">
    <property type="entry name" value="ATP-DEPENDENT CLP PROTEASE PROTEOLYTIC SUBUNIT"/>
    <property type="match status" value="1"/>
</dbReference>
<dbReference type="Pfam" id="PF00574">
    <property type="entry name" value="CLP_protease"/>
    <property type="match status" value="1"/>
</dbReference>
<dbReference type="PRINTS" id="PR00127">
    <property type="entry name" value="CLPPROTEASEP"/>
</dbReference>
<dbReference type="SUPFAM" id="SSF52096">
    <property type="entry name" value="ClpP/crotonase"/>
    <property type="match status" value="1"/>
</dbReference>
<dbReference type="PROSITE" id="PS00382">
    <property type="entry name" value="CLP_PROTEASE_HIS"/>
    <property type="match status" value="1"/>
</dbReference>
<dbReference type="PROSITE" id="PS00381">
    <property type="entry name" value="CLP_PROTEASE_SER"/>
    <property type="match status" value="1"/>
</dbReference>
<gene>
    <name evidence="1" type="primary">clpP</name>
    <name type="ordered locus">HI_0714</name>
</gene>
<sequence>MSVIPMVVEQTSRGERSYDIYSRLLKERVIFLSGEVEDRMANLIVAQLLFLESEDPTKDINIYINSPGGSVTAGMAIYDTMQFIKPDIRTLCIGQACSMGAFLLAGGTAGKRAALPNARVMIHQPLGGFRGQASDIQIHAQEILKIKHTLNDRLAFHTGQGIERIEKDTDRDNFMSAEEAQAYGLVDEVLVKR</sequence>
<comment type="function">
    <text evidence="1">Cleaves peptides in various proteins in a process that requires ATP hydrolysis. Has a chymotrypsin-like activity. Plays a major role in the degradation of misfolded proteins.</text>
</comment>
<comment type="catalytic activity">
    <reaction evidence="1">
        <text>Hydrolysis of proteins to small peptides in the presence of ATP and magnesium. alpha-casein is the usual test substrate. In the absence of ATP, only oligopeptides shorter than five residues are hydrolyzed (such as succinyl-Leu-Tyr-|-NHMec, and Leu-Tyr-Leu-|-Tyr-Trp, in which cleavage of the -Tyr-|-Leu- and -Tyr-|-Trp bonds also occurs).</text>
        <dbReference type="EC" id="3.4.21.92"/>
    </reaction>
</comment>
<comment type="subunit">
    <text evidence="1">Fourteen ClpP subunits assemble into 2 heptameric rings which stack back to back to give a disk-like structure with a central cavity, resembling the structure of eukaryotic proteasomes.</text>
</comment>
<comment type="subcellular location">
    <subcellularLocation>
        <location evidence="1">Cytoplasm</location>
    </subcellularLocation>
</comment>
<comment type="similarity">
    <text evidence="1">Belongs to the peptidase S14 family.</text>
</comment>
<protein>
    <recommendedName>
        <fullName evidence="1">ATP-dependent Clp protease proteolytic subunit</fullName>
        <ecNumber evidence="1">3.4.21.92</ecNumber>
    </recommendedName>
    <alternativeName>
        <fullName evidence="1">Endopeptidase Clp</fullName>
    </alternativeName>
</protein>